<feature type="chain" id="PRO_0000058484" description="Proline-rich nuclear receptor coactivator 2">
    <location>
        <begin position="1"/>
        <end position="141"/>
    </location>
</feature>
<feature type="region of interest" description="Disordered" evidence="2">
    <location>
        <begin position="1"/>
        <end position="51"/>
    </location>
</feature>
<feature type="short sequence motif" description="SH3-binding">
    <location>
        <begin position="101"/>
        <end position="107"/>
    </location>
</feature>
<feature type="compositionally biased region" description="Polar residues" evidence="2">
    <location>
        <begin position="11"/>
        <end position="21"/>
    </location>
</feature>
<protein>
    <recommendedName>
        <fullName>Proline-rich nuclear receptor coactivator 2</fullName>
    </recommendedName>
</protein>
<organism>
    <name type="scientific">Gallus gallus</name>
    <name type="common">Chicken</name>
    <dbReference type="NCBI Taxonomy" id="9031"/>
    <lineage>
        <taxon>Eukaryota</taxon>
        <taxon>Metazoa</taxon>
        <taxon>Chordata</taxon>
        <taxon>Craniata</taxon>
        <taxon>Vertebrata</taxon>
        <taxon>Euteleostomi</taxon>
        <taxon>Archelosauria</taxon>
        <taxon>Archosauria</taxon>
        <taxon>Dinosauria</taxon>
        <taxon>Saurischia</taxon>
        <taxon>Theropoda</taxon>
        <taxon>Coelurosauria</taxon>
        <taxon>Aves</taxon>
        <taxon>Neognathae</taxon>
        <taxon>Galloanserae</taxon>
        <taxon>Galliformes</taxon>
        <taxon>Phasianidae</taxon>
        <taxon>Phasianinae</taxon>
        <taxon>Gallus</taxon>
    </lineage>
</organism>
<accession>Q5ZMB7</accession>
<evidence type="ECO:0000250" key="1"/>
<evidence type="ECO:0000256" key="2">
    <source>
        <dbReference type="SAM" id="MobiDB-lite"/>
    </source>
</evidence>
<evidence type="ECO:0000305" key="3"/>
<keyword id="KW-0010">Activator</keyword>
<keyword id="KW-0963">Cytoplasm</keyword>
<keyword id="KW-0866">Nonsense-mediated mRNA decay</keyword>
<keyword id="KW-0539">Nucleus</keyword>
<keyword id="KW-1185">Reference proteome</keyword>
<keyword id="KW-0804">Transcription</keyword>
<keyword id="KW-0805">Transcription regulation</keyword>
<gene>
    <name type="primary">PNRC2</name>
    <name type="ORF">RCJMB04_2j14</name>
</gene>
<dbReference type="EMBL" id="AJ719467">
    <property type="protein sequence ID" value="CAG31126.1"/>
    <property type="molecule type" value="mRNA"/>
</dbReference>
<dbReference type="RefSeq" id="NP_001006315.1">
    <property type="nucleotide sequence ID" value="NM_001006315.1"/>
</dbReference>
<dbReference type="FunCoup" id="Q5ZMB7">
    <property type="interactions" value="1437"/>
</dbReference>
<dbReference type="STRING" id="9031.ENSGALP00000039675"/>
<dbReference type="PaxDb" id="9031-ENSGALP00000039675"/>
<dbReference type="GeneID" id="419688"/>
<dbReference type="KEGG" id="gga:419688"/>
<dbReference type="CTD" id="55629"/>
<dbReference type="VEuPathDB" id="HostDB:geneid_419688"/>
<dbReference type="eggNOG" id="ENOG502RZZX">
    <property type="taxonomic scope" value="Eukaryota"/>
</dbReference>
<dbReference type="InParanoid" id="Q5ZMB7"/>
<dbReference type="OrthoDB" id="8732832at2759"/>
<dbReference type="PhylomeDB" id="Q5ZMB7"/>
<dbReference type="PRO" id="PR:Q5ZMB7"/>
<dbReference type="Proteomes" id="UP000000539">
    <property type="component" value="Unassembled WGS sequence"/>
</dbReference>
<dbReference type="GO" id="GO:0005634">
    <property type="term" value="C:nucleus"/>
    <property type="evidence" value="ECO:0000250"/>
    <property type="project" value="UniProtKB"/>
</dbReference>
<dbReference type="GO" id="GO:0000932">
    <property type="term" value="C:P-body"/>
    <property type="evidence" value="ECO:0000250"/>
    <property type="project" value="UniProtKB"/>
</dbReference>
<dbReference type="GO" id="GO:0000184">
    <property type="term" value="P:nuclear-transcribed mRNA catabolic process, nonsense-mediated decay"/>
    <property type="evidence" value="ECO:0000250"/>
    <property type="project" value="UniProtKB"/>
</dbReference>
<dbReference type="InterPro" id="IPR028322">
    <property type="entry name" value="PNRC-like_rgn"/>
</dbReference>
<dbReference type="InterPro" id="IPR026780">
    <property type="entry name" value="PNRC1/2"/>
</dbReference>
<dbReference type="PANTHER" id="PTHR15405">
    <property type="entry name" value="PROLINE-RICH NUCLEAR RECEPTOR COACTIVATOR"/>
    <property type="match status" value="1"/>
</dbReference>
<dbReference type="Pfam" id="PF15365">
    <property type="entry name" value="PNRC"/>
    <property type="match status" value="1"/>
</dbReference>
<proteinExistence type="evidence at transcript level"/>
<comment type="function">
    <text evidence="1">Involved in nonsense-mediated mRNA decay (NMD) by acting as a bridge between the mRNA decapping complex and the NMD machinery. May act by targeting the NMD machinery to the P-body and recruiting the decapping machinery to aberrant mRNAs. Required for UPF1/RENT1 localization to the P-body. Also acts as a nuclear receptor coactivator (By similarity).</text>
</comment>
<comment type="subcellular location">
    <subcellularLocation>
        <location evidence="1">Nucleus</location>
    </subcellularLocation>
    <subcellularLocation>
        <location evidence="1">Cytoplasm</location>
        <location evidence="1">P-body</location>
    </subcellularLocation>
</comment>
<comment type="similarity">
    <text evidence="3">Belongs to the PNRC family. PNRC2 subfamily.</text>
</comment>
<reference key="1">
    <citation type="journal article" date="2005" name="Genome Biol.">
        <title>Full-length cDNAs from chicken bursal lymphocytes to facilitate gene function analysis.</title>
        <authorList>
            <person name="Caldwell R.B."/>
            <person name="Kierzek A.M."/>
            <person name="Arakawa H."/>
            <person name="Bezzubov Y."/>
            <person name="Zaim J."/>
            <person name="Fiedler P."/>
            <person name="Kutter S."/>
            <person name="Blagodatski A."/>
            <person name="Kostovska D."/>
            <person name="Koter M."/>
            <person name="Plachy J."/>
            <person name="Carninci P."/>
            <person name="Hayashizaki Y."/>
            <person name="Buerstedde J.-M."/>
        </authorList>
    </citation>
    <scope>NUCLEOTIDE SEQUENCE [LARGE SCALE MRNA]</scope>
    <source>
        <strain>CB</strain>
        <tissue>Bursa of Fabricius</tissue>
    </source>
</reference>
<name>PNRC2_CHICK</name>
<sequence>MVGGERFNIPVPQSRNITKNHQQLKNRQKNKDQNSQMKKTYMKKERGHGCNSLSGAWQAMQKAGKNNVHFPCNQNWSPNLSNRNLFFSPQTNQNYAGAKFSEPPSPSVLPKPPSHWVPVSFKPSDKEIMTFQLKTLLKVQA</sequence>